<name>AROH_BUCAI</name>
<reference key="1">
    <citation type="journal article" date="2000" name="Nature">
        <title>Genome sequence of the endocellular bacterial symbiont of aphids Buchnera sp. APS.</title>
        <authorList>
            <person name="Shigenobu S."/>
            <person name="Watanabe H."/>
            <person name="Hattori M."/>
            <person name="Sakaki Y."/>
            <person name="Ishikawa H."/>
        </authorList>
    </citation>
    <scope>NUCLEOTIDE SEQUENCE [LARGE SCALE GENOMIC DNA]</scope>
    <source>
        <strain>APS</strain>
    </source>
</reference>
<evidence type="ECO:0000305" key="1"/>
<proteinExistence type="inferred from homology"/>
<feature type="chain" id="PRO_0000140837" description="Phospho-2-dehydro-3-deoxyheptonate aldolase, Trp-sensitive">
    <location>
        <begin position="1"/>
        <end position="348"/>
    </location>
</feature>
<sequence length="348" mass="38889">MKKTDELRTIRIDPLITPAELARQYAITSDIMDTVIATRQNIARIMTGQDARLLVVIGPCSVHDPIAAVEYAHRLYELRVKYKDRLEIIMRTYFEKPRTVVGWKGLISDPDLNGSFRVNHGLAVARKLLLDINALGMPAATEFLDIVIGQFIADLISWGAIGARTTESQIHREMASALSCPVGFKNGTDGNIRIAIDAIRAAKVRHLFFAPNKDGQMTINHTSGNPYGHIIMRGGRAPNYHPDDINSAVKHLREFDLLEHLMIDFSHGNCLKEHLRQKNVSKSVSYQISHGSKAIFGVMIESFLEEGFQTVTNNQPLIYGKSITDACLNWKDSVLIIEQLADAVDARF</sequence>
<organism>
    <name type="scientific">Buchnera aphidicola subsp. Acyrthosiphon pisum (strain APS)</name>
    <name type="common">Acyrthosiphon pisum symbiotic bacterium</name>
    <dbReference type="NCBI Taxonomy" id="107806"/>
    <lineage>
        <taxon>Bacteria</taxon>
        <taxon>Pseudomonadati</taxon>
        <taxon>Pseudomonadota</taxon>
        <taxon>Gammaproteobacteria</taxon>
        <taxon>Enterobacterales</taxon>
        <taxon>Erwiniaceae</taxon>
        <taxon>Buchnera</taxon>
    </lineage>
</organism>
<comment type="function">
    <text>Stereospecific condensation of phosphoenolpyruvate (PEP) and D-erythrose-4-phosphate (E4P) giving rise to 3-deoxy-D-arabino-heptulosonate-7-phosphate (DAHP).</text>
</comment>
<comment type="catalytic activity">
    <reaction>
        <text>D-erythrose 4-phosphate + phosphoenolpyruvate + H2O = 7-phospho-2-dehydro-3-deoxy-D-arabino-heptonate + phosphate</text>
        <dbReference type="Rhea" id="RHEA:14717"/>
        <dbReference type="ChEBI" id="CHEBI:15377"/>
        <dbReference type="ChEBI" id="CHEBI:16897"/>
        <dbReference type="ChEBI" id="CHEBI:43474"/>
        <dbReference type="ChEBI" id="CHEBI:58394"/>
        <dbReference type="ChEBI" id="CHEBI:58702"/>
        <dbReference type="EC" id="2.5.1.54"/>
    </reaction>
</comment>
<comment type="pathway">
    <text>Metabolic intermediate biosynthesis; chorismate biosynthesis; chorismate from D-erythrose 4-phosphate and phosphoenolpyruvate: step 1/7.</text>
</comment>
<comment type="similarity">
    <text evidence="1">Belongs to the class-I DAHP synthase family.</text>
</comment>
<gene>
    <name type="primary">aroH</name>
    <name type="ordered locus">BU124</name>
</gene>
<keyword id="KW-0028">Amino-acid biosynthesis</keyword>
<keyword id="KW-0057">Aromatic amino acid biosynthesis</keyword>
<keyword id="KW-1185">Reference proteome</keyword>
<keyword id="KW-0808">Transferase</keyword>
<protein>
    <recommendedName>
        <fullName>Phospho-2-dehydro-3-deoxyheptonate aldolase, Trp-sensitive</fullName>
        <ecNumber>2.5.1.54</ecNumber>
    </recommendedName>
    <alternativeName>
        <fullName>3-deoxy-D-arabino-heptulosonate 7-phosphate synthase</fullName>
    </alternativeName>
    <alternativeName>
        <fullName>DAHP synthase</fullName>
    </alternativeName>
    <alternativeName>
        <fullName>Phospho-2-keto-3-deoxyheptonate aldolase</fullName>
    </alternativeName>
</protein>
<dbReference type="EC" id="2.5.1.54"/>
<dbReference type="EMBL" id="BA000003">
    <property type="protein sequence ID" value="BAB12842.1"/>
    <property type="molecule type" value="Genomic_DNA"/>
</dbReference>
<dbReference type="RefSeq" id="NP_239956.1">
    <property type="nucleotide sequence ID" value="NC_002528.1"/>
</dbReference>
<dbReference type="RefSeq" id="WP_009874080.1">
    <property type="nucleotide sequence ID" value="NC_002528.1"/>
</dbReference>
<dbReference type="SMR" id="P57224"/>
<dbReference type="STRING" id="563178.BUAP5A_122"/>
<dbReference type="EnsemblBacteria" id="BAB12842">
    <property type="protein sequence ID" value="BAB12842"/>
    <property type="gene ID" value="BAB12842"/>
</dbReference>
<dbReference type="KEGG" id="buc:BU124"/>
<dbReference type="PATRIC" id="fig|107806.10.peg.133"/>
<dbReference type="eggNOG" id="COG0722">
    <property type="taxonomic scope" value="Bacteria"/>
</dbReference>
<dbReference type="HOGENOM" id="CLU_030903_0_1_6"/>
<dbReference type="UniPathway" id="UPA00053">
    <property type="reaction ID" value="UER00084"/>
</dbReference>
<dbReference type="Proteomes" id="UP000001806">
    <property type="component" value="Chromosome"/>
</dbReference>
<dbReference type="GO" id="GO:0005737">
    <property type="term" value="C:cytoplasm"/>
    <property type="evidence" value="ECO:0007669"/>
    <property type="project" value="TreeGrafter"/>
</dbReference>
<dbReference type="GO" id="GO:0003849">
    <property type="term" value="F:3-deoxy-7-phosphoheptulonate synthase activity"/>
    <property type="evidence" value="ECO:0007669"/>
    <property type="project" value="UniProtKB-EC"/>
</dbReference>
<dbReference type="GO" id="GO:0008652">
    <property type="term" value="P:amino acid biosynthetic process"/>
    <property type="evidence" value="ECO:0007669"/>
    <property type="project" value="UniProtKB-KW"/>
</dbReference>
<dbReference type="GO" id="GO:0009073">
    <property type="term" value="P:aromatic amino acid family biosynthetic process"/>
    <property type="evidence" value="ECO:0007669"/>
    <property type="project" value="UniProtKB-KW"/>
</dbReference>
<dbReference type="GO" id="GO:0009423">
    <property type="term" value="P:chorismate biosynthetic process"/>
    <property type="evidence" value="ECO:0007669"/>
    <property type="project" value="UniProtKB-UniPathway"/>
</dbReference>
<dbReference type="FunFam" id="3.20.20.70:FF:000005">
    <property type="entry name" value="Phospho-2-dehydro-3-deoxyheptonate aldolase"/>
    <property type="match status" value="1"/>
</dbReference>
<dbReference type="Gene3D" id="3.20.20.70">
    <property type="entry name" value="Aldolase class I"/>
    <property type="match status" value="1"/>
</dbReference>
<dbReference type="InterPro" id="IPR013785">
    <property type="entry name" value="Aldolase_TIM"/>
</dbReference>
<dbReference type="InterPro" id="IPR006218">
    <property type="entry name" value="DAHP1/KDSA"/>
</dbReference>
<dbReference type="InterPro" id="IPR006219">
    <property type="entry name" value="DAHP_synth_1"/>
</dbReference>
<dbReference type="NCBIfam" id="TIGR00034">
    <property type="entry name" value="aroFGH"/>
    <property type="match status" value="1"/>
</dbReference>
<dbReference type="NCBIfam" id="NF009395">
    <property type="entry name" value="PRK12755.1"/>
    <property type="match status" value="1"/>
</dbReference>
<dbReference type="NCBIfam" id="NF009396">
    <property type="entry name" value="PRK12756.1"/>
    <property type="match status" value="1"/>
</dbReference>
<dbReference type="PANTHER" id="PTHR21225">
    <property type="entry name" value="PHOSPHO-2-DEHYDRO-3-DEOXYHEPTONATE ALDOLASE DAHP SYNTHETASE"/>
    <property type="match status" value="1"/>
</dbReference>
<dbReference type="PANTHER" id="PTHR21225:SF6">
    <property type="entry name" value="PHOSPHO-2-DEHYDRO-3-DEOXYHEPTONATE ALDOLASE, TRP-SENSITIVE"/>
    <property type="match status" value="1"/>
</dbReference>
<dbReference type="Pfam" id="PF00793">
    <property type="entry name" value="DAHP_synth_1"/>
    <property type="match status" value="1"/>
</dbReference>
<dbReference type="PIRSF" id="PIRSF001361">
    <property type="entry name" value="DAHP_synthase"/>
    <property type="match status" value="1"/>
</dbReference>
<dbReference type="SUPFAM" id="SSF51569">
    <property type="entry name" value="Aldolase"/>
    <property type="match status" value="1"/>
</dbReference>
<accession>P57224</accession>